<protein>
    <recommendedName>
        <fullName evidence="1">Small ribosomal subunit protein uS5</fullName>
    </recommendedName>
    <alternativeName>
        <fullName evidence="3">30S ribosomal protein S5</fullName>
    </alternativeName>
</protein>
<reference key="1">
    <citation type="journal article" date="2005" name="J. Bacteriol.">
        <title>Swine and poultry pathogens: the complete genome sequences of two strains of Mycoplasma hyopneumoniae and a strain of Mycoplasma synoviae.</title>
        <authorList>
            <person name="Vasconcelos A.T.R."/>
            <person name="Ferreira H.B."/>
            <person name="Bizarro C.V."/>
            <person name="Bonatto S.L."/>
            <person name="Carvalho M.O."/>
            <person name="Pinto P.M."/>
            <person name="Almeida D.F."/>
            <person name="Almeida L.G.P."/>
            <person name="Almeida R."/>
            <person name="Alves-Junior L."/>
            <person name="Assuncao E.N."/>
            <person name="Azevedo V.A.C."/>
            <person name="Bogo M.R."/>
            <person name="Brigido M.M."/>
            <person name="Brocchi M."/>
            <person name="Burity H.A."/>
            <person name="Camargo A.A."/>
            <person name="Camargo S.S."/>
            <person name="Carepo M.S."/>
            <person name="Carraro D.M."/>
            <person name="de Mattos Cascardo J.C."/>
            <person name="Castro L.A."/>
            <person name="Cavalcanti G."/>
            <person name="Chemale G."/>
            <person name="Collevatti R.G."/>
            <person name="Cunha C.W."/>
            <person name="Dallagiovanna B."/>
            <person name="Dambros B.P."/>
            <person name="Dellagostin O.A."/>
            <person name="Falcao C."/>
            <person name="Fantinatti-Garboggini F."/>
            <person name="Felipe M.S.S."/>
            <person name="Fiorentin L."/>
            <person name="Franco G.R."/>
            <person name="Freitas N.S.A."/>
            <person name="Frias D."/>
            <person name="Grangeiro T.B."/>
            <person name="Grisard E.C."/>
            <person name="Guimaraes C.T."/>
            <person name="Hungria M."/>
            <person name="Jardim S.N."/>
            <person name="Krieger M.A."/>
            <person name="Laurino J.P."/>
            <person name="Lima L.F.A."/>
            <person name="Lopes M.I."/>
            <person name="Loreto E.L.S."/>
            <person name="Madeira H.M.F."/>
            <person name="Manfio G.P."/>
            <person name="Maranhao A.Q."/>
            <person name="Martinkovics C.T."/>
            <person name="Medeiros S.R.B."/>
            <person name="Moreira M.A.M."/>
            <person name="Neiva M."/>
            <person name="Ramalho-Neto C.E."/>
            <person name="Nicolas M.F."/>
            <person name="Oliveira S.C."/>
            <person name="Paixao R.F.C."/>
            <person name="Pedrosa F.O."/>
            <person name="Pena S.D.J."/>
            <person name="Pereira M."/>
            <person name="Pereira-Ferrari L."/>
            <person name="Piffer I."/>
            <person name="Pinto L.S."/>
            <person name="Potrich D.P."/>
            <person name="Salim A.C.M."/>
            <person name="Santos F.R."/>
            <person name="Schmitt R."/>
            <person name="Schneider M.P.C."/>
            <person name="Schrank A."/>
            <person name="Schrank I.S."/>
            <person name="Schuck A.F."/>
            <person name="Seuanez H.N."/>
            <person name="Silva D.W."/>
            <person name="Silva R."/>
            <person name="Silva S.C."/>
            <person name="Soares C.M.A."/>
            <person name="Souza K.R.L."/>
            <person name="Souza R.C."/>
            <person name="Staats C.C."/>
            <person name="Steffens M.B.R."/>
            <person name="Teixeira S.M.R."/>
            <person name="Urmenyi T.P."/>
            <person name="Vainstein M.H."/>
            <person name="Zuccherato L.W."/>
            <person name="Simpson A.J.G."/>
            <person name="Zaha A."/>
        </authorList>
    </citation>
    <scope>NUCLEOTIDE SEQUENCE [LARGE SCALE GENOMIC DNA]</scope>
    <source>
        <strain>7448</strain>
    </source>
</reference>
<evidence type="ECO:0000255" key="1">
    <source>
        <dbReference type="HAMAP-Rule" id="MF_01307"/>
    </source>
</evidence>
<evidence type="ECO:0000256" key="2">
    <source>
        <dbReference type="SAM" id="MobiDB-lite"/>
    </source>
</evidence>
<evidence type="ECO:0000305" key="3"/>
<comment type="function">
    <text evidence="1">With S4 and S12 plays an important role in translational accuracy.</text>
</comment>
<comment type="function">
    <text evidence="1">Located at the back of the 30S subunit body where it stabilizes the conformation of the head with respect to the body.</text>
</comment>
<comment type="subunit">
    <text evidence="1">Part of the 30S ribosomal subunit. Contacts proteins S4 and S8.</text>
</comment>
<comment type="domain">
    <text>The N-terminal domain interacts with the head of the 30S subunit; the C-terminal domain interacts with the body and contacts protein S4. The interaction surface between S4 and S5 is involved in control of translational fidelity.</text>
</comment>
<comment type="similarity">
    <text evidence="1">Belongs to the universal ribosomal protein uS5 family.</text>
</comment>
<gene>
    <name evidence="1" type="primary">rpsE</name>
    <name type="ordered locus">MHP7448_0177</name>
</gene>
<organism>
    <name type="scientific">Mesomycoplasma hyopneumoniae (strain 7448)</name>
    <name type="common">Mycoplasma hyopneumoniae</name>
    <dbReference type="NCBI Taxonomy" id="262722"/>
    <lineage>
        <taxon>Bacteria</taxon>
        <taxon>Bacillati</taxon>
        <taxon>Mycoplasmatota</taxon>
        <taxon>Mycoplasmoidales</taxon>
        <taxon>Metamycoplasmataceae</taxon>
        <taxon>Mesomycoplasma</taxon>
    </lineage>
</organism>
<sequence length="216" mass="24166">MDKKLENQKDLLNQDPKVELNSQSVAKNPLNSREVKPIQRRRPLRKNARDKNSKPEFEERVIAIHRVVKVVKGGRRFSFSAFAVVGNKKGRVGFGHGKANEVQDAVKKAIKDAQNRLVSVPIYRKSTVPHEIAVKYLASKILIKPAPRGKGIVASNTVRAVVELAGYTDIYTKTYGSRTKINVVRATLKALLKLRTINQVAELRDLSPQQAQAQKV</sequence>
<proteinExistence type="inferred from homology"/>
<name>RS5_MESH7</name>
<feature type="chain" id="PRO_0000230349" description="Small ribosomal subunit protein uS5">
    <location>
        <begin position="1"/>
        <end position="216"/>
    </location>
</feature>
<feature type="domain" description="S5 DRBM" evidence="1">
    <location>
        <begin position="57"/>
        <end position="120"/>
    </location>
</feature>
<feature type="region of interest" description="Disordered" evidence="2">
    <location>
        <begin position="1"/>
        <end position="55"/>
    </location>
</feature>
<feature type="compositionally biased region" description="Polar residues" evidence="2">
    <location>
        <begin position="20"/>
        <end position="31"/>
    </location>
</feature>
<dbReference type="EMBL" id="AE017244">
    <property type="protein sequence ID" value="AAZ53551.1"/>
    <property type="molecule type" value="Genomic_DNA"/>
</dbReference>
<dbReference type="RefSeq" id="WP_011290058.1">
    <property type="nucleotide sequence ID" value="NC_007332.1"/>
</dbReference>
<dbReference type="SMR" id="Q4A8I8"/>
<dbReference type="KEGG" id="mhp:MHP7448_0177"/>
<dbReference type="HOGENOM" id="CLU_065898_2_1_14"/>
<dbReference type="Proteomes" id="UP000000553">
    <property type="component" value="Chromosome"/>
</dbReference>
<dbReference type="GO" id="GO:0015935">
    <property type="term" value="C:small ribosomal subunit"/>
    <property type="evidence" value="ECO:0007669"/>
    <property type="project" value="InterPro"/>
</dbReference>
<dbReference type="GO" id="GO:0019843">
    <property type="term" value="F:rRNA binding"/>
    <property type="evidence" value="ECO:0007669"/>
    <property type="project" value="UniProtKB-UniRule"/>
</dbReference>
<dbReference type="GO" id="GO:0003735">
    <property type="term" value="F:structural constituent of ribosome"/>
    <property type="evidence" value="ECO:0007669"/>
    <property type="project" value="InterPro"/>
</dbReference>
<dbReference type="GO" id="GO:0006412">
    <property type="term" value="P:translation"/>
    <property type="evidence" value="ECO:0007669"/>
    <property type="project" value="UniProtKB-UniRule"/>
</dbReference>
<dbReference type="FunFam" id="3.30.160.20:FF:000001">
    <property type="entry name" value="30S ribosomal protein S5"/>
    <property type="match status" value="1"/>
</dbReference>
<dbReference type="FunFam" id="3.30.230.10:FF:000002">
    <property type="entry name" value="30S ribosomal protein S5"/>
    <property type="match status" value="1"/>
</dbReference>
<dbReference type="Gene3D" id="3.30.160.20">
    <property type="match status" value="1"/>
</dbReference>
<dbReference type="Gene3D" id="3.30.230.10">
    <property type="match status" value="1"/>
</dbReference>
<dbReference type="HAMAP" id="MF_01307_B">
    <property type="entry name" value="Ribosomal_uS5_B"/>
    <property type="match status" value="1"/>
</dbReference>
<dbReference type="InterPro" id="IPR020568">
    <property type="entry name" value="Ribosomal_Su5_D2-typ_SF"/>
</dbReference>
<dbReference type="InterPro" id="IPR000851">
    <property type="entry name" value="Ribosomal_uS5"/>
</dbReference>
<dbReference type="InterPro" id="IPR005712">
    <property type="entry name" value="Ribosomal_uS5_bac-type"/>
</dbReference>
<dbReference type="InterPro" id="IPR005324">
    <property type="entry name" value="Ribosomal_uS5_C"/>
</dbReference>
<dbReference type="InterPro" id="IPR013810">
    <property type="entry name" value="Ribosomal_uS5_N"/>
</dbReference>
<dbReference type="InterPro" id="IPR018192">
    <property type="entry name" value="Ribosomal_uS5_N_CS"/>
</dbReference>
<dbReference type="InterPro" id="IPR014721">
    <property type="entry name" value="Ribsml_uS5_D2-typ_fold_subgr"/>
</dbReference>
<dbReference type="NCBIfam" id="TIGR01021">
    <property type="entry name" value="rpsE_bact"/>
    <property type="match status" value="1"/>
</dbReference>
<dbReference type="PANTHER" id="PTHR48277">
    <property type="entry name" value="MITOCHONDRIAL RIBOSOMAL PROTEIN S5"/>
    <property type="match status" value="1"/>
</dbReference>
<dbReference type="PANTHER" id="PTHR48277:SF1">
    <property type="entry name" value="MITOCHONDRIAL RIBOSOMAL PROTEIN S5"/>
    <property type="match status" value="1"/>
</dbReference>
<dbReference type="Pfam" id="PF00333">
    <property type="entry name" value="Ribosomal_S5"/>
    <property type="match status" value="1"/>
</dbReference>
<dbReference type="Pfam" id="PF03719">
    <property type="entry name" value="Ribosomal_S5_C"/>
    <property type="match status" value="1"/>
</dbReference>
<dbReference type="SUPFAM" id="SSF54768">
    <property type="entry name" value="dsRNA-binding domain-like"/>
    <property type="match status" value="1"/>
</dbReference>
<dbReference type="SUPFAM" id="SSF54211">
    <property type="entry name" value="Ribosomal protein S5 domain 2-like"/>
    <property type="match status" value="1"/>
</dbReference>
<dbReference type="PROSITE" id="PS00585">
    <property type="entry name" value="RIBOSOMAL_S5"/>
    <property type="match status" value="1"/>
</dbReference>
<dbReference type="PROSITE" id="PS50881">
    <property type="entry name" value="S5_DSRBD"/>
    <property type="match status" value="1"/>
</dbReference>
<keyword id="KW-0687">Ribonucleoprotein</keyword>
<keyword id="KW-0689">Ribosomal protein</keyword>
<keyword id="KW-0694">RNA-binding</keyword>
<keyword id="KW-0699">rRNA-binding</keyword>
<accession>Q4A8I8</accession>